<comment type="function">
    <text evidence="1">Involved in protein export. Acts as a chaperone by maintaining the newly synthesized protein in an open conformation. Functions as a peptidyl-prolyl cis-trans isomerase.</text>
</comment>
<comment type="catalytic activity">
    <reaction evidence="1">
        <text>[protein]-peptidylproline (omega=180) = [protein]-peptidylproline (omega=0)</text>
        <dbReference type="Rhea" id="RHEA:16237"/>
        <dbReference type="Rhea" id="RHEA-COMP:10747"/>
        <dbReference type="Rhea" id="RHEA-COMP:10748"/>
        <dbReference type="ChEBI" id="CHEBI:83833"/>
        <dbReference type="ChEBI" id="CHEBI:83834"/>
        <dbReference type="EC" id="5.2.1.8"/>
    </reaction>
</comment>
<comment type="subcellular location">
    <subcellularLocation>
        <location>Cytoplasm</location>
    </subcellularLocation>
    <text evidence="1">About half TF is bound to the ribosome near the polypeptide exit tunnel while the other half is free in the cytoplasm.</text>
</comment>
<comment type="domain">
    <text evidence="1">Consists of 3 domains; the N-terminus binds the ribosome, the middle domain has PPIase activity, while the C-terminus has intrinsic chaperone activity on its own.</text>
</comment>
<comment type="similarity">
    <text evidence="1">Belongs to the FKBP-type PPIase family. Tig subfamily.</text>
</comment>
<gene>
    <name evidence="1" type="primary">tig</name>
    <name type="ordered locus">VP0916</name>
</gene>
<evidence type="ECO:0000255" key="1">
    <source>
        <dbReference type="HAMAP-Rule" id="MF_00303"/>
    </source>
</evidence>
<keyword id="KW-0131">Cell cycle</keyword>
<keyword id="KW-0132">Cell division</keyword>
<keyword id="KW-0143">Chaperone</keyword>
<keyword id="KW-0963">Cytoplasm</keyword>
<keyword id="KW-0413">Isomerase</keyword>
<keyword id="KW-0697">Rotamase</keyword>
<organism>
    <name type="scientific">Vibrio parahaemolyticus serotype O3:K6 (strain RIMD 2210633)</name>
    <dbReference type="NCBI Taxonomy" id="223926"/>
    <lineage>
        <taxon>Bacteria</taxon>
        <taxon>Pseudomonadati</taxon>
        <taxon>Pseudomonadota</taxon>
        <taxon>Gammaproteobacteria</taxon>
        <taxon>Vibrionales</taxon>
        <taxon>Vibrionaceae</taxon>
        <taxon>Vibrio</taxon>
    </lineage>
</organism>
<name>TIG_VIBPA</name>
<accession>Q87R81</accession>
<sequence length="434" mass="48255">MQVTVETLEGLERRLNITVPAANIEDAVTAELRNIAKNRRFDGFRKGKVPLKMVAKMYGKAVRQDVLGEVMQRHFIEAIVKEKINPAGAPTFAPVENKEGADLVFTATFEVYPEVELKGLENITVEKPLTEVKEADVEEMIETLRKQQATWVEVEEAAEAGKRVSIDFVGSIDGEEFEGGKAENFPLEMGAGRMIPGFEDGIAGKTAGMEFDIDVTFPEDYHAENLKGKAAKFAIKVNKVEARELPELNDEFVAKFGVAEGGVDALKAEVRKNMERELKQAVKTRIKEQAIEGLVKENEIDVPAALIEQEIHVLRQQAAQRFGGNPEAAAQLPRELFEEQAKRRVVVGLLLGEVIKSEELKADDEKVKALIEEMATAYEDPSEVIAYYEQNEQMMNNMRNVALEEQAIDAIIAKAQVTEKEVGFNELLNQQPAA</sequence>
<feature type="chain" id="PRO_0000179459" description="Trigger factor">
    <location>
        <begin position="1"/>
        <end position="434"/>
    </location>
</feature>
<feature type="domain" description="PPIase FKBP-type" evidence="1">
    <location>
        <begin position="161"/>
        <end position="246"/>
    </location>
</feature>
<dbReference type="EC" id="5.2.1.8" evidence="1"/>
<dbReference type="EMBL" id="BA000031">
    <property type="protein sequence ID" value="BAC59179.1"/>
    <property type="molecule type" value="Genomic_DNA"/>
</dbReference>
<dbReference type="RefSeq" id="NP_797295.1">
    <property type="nucleotide sequence ID" value="NC_004603.1"/>
</dbReference>
<dbReference type="RefSeq" id="WP_005460612.1">
    <property type="nucleotide sequence ID" value="NC_004603.1"/>
</dbReference>
<dbReference type="SMR" id="Q87R81"/>
<dbReference type="GeneID" id="1188414"/>
<dbReference type="KEGG" id="vpa:VP0916"/>
<dbReference type="PATRIC" id="fig|223926.6.peg.868"/>
<dbReference type="eggNOG" id="COG0544">
    <property type="taxonomic scope" value="Bacteria"/>
</dbReference>
<dbReference type="HOGENOM" id="CLU_033058_2_0_6"/>
<dbReference type="Proteomes" id="UP000002493">
    <property type="component" value="Chromosome 1"/>
</dbReference>
<dbReference type="GO" id="GO:0005737">
    <property type="term" value="C:cytoplasm"/>
    <property type="evidence" value="ECO:0007669"/>
    <property type="project" value="UniProtKB-SubCell"/>
</dbReference>
<dbReference type="GO" id="GO:0003755">
    <property type="term" value="F:peptidyl-prolyl cis-trans isomerase activity"/>
    <property type="evidence" value="ECO:0007669"/>
    <property type="project" value="UniProtKB-UniRule"/>
</dbReference>
<dbReference type="GO" id="GO:0044183">
    <property type="term" value="F:protein folding chaperone"/>
    <property type="evidence" value="ECO:0007669"/>
    <property type="project" value="TreeGrafter"/>
</dbReference>
<dbReference type="GO" id="GO:0043022">
    <property type="term" value="F:ribosome binding"/>
    <property type="evidence" value="ECO:0007669"/>
    <property type="project" value="TreeGrafter"/>
</dbReference>
<dbReference type="GO" id="GO:0051083">
    <property type="term" value="P:'de novo' cotranslational protein folding"/>
    <property type="evidence" value="ECO:0007669"/>
    <property type="project" value="TreeGrafter"/>
</dbReference>
<dbReference type="GO" id="GO:0051301">
    <property type="term" value="P:cell division"/>
    <property type="evidence" value="ECO:0007669"/>
    <property type="project" value="UniProtKB-KW"/>
</dbReference>
<dbReference type="GO" id="GO:0061077">
    <property type="term" value="P:chaperone-mediated protein folding"/>
    <property type="evidence" value="ECO:0007669"/>
    <property type="project" value="TreeGrafter"/>
</dbReference>
<dbReference type="GO" id="GO:0015031">
    <property type="term" value="P:protein transport"/>
    <property type="evidence" value="ECO:0007669"/>
    <property type="project" value="UniProtKB-UniRule"/>
</dbReference>
<dbReference type="GO" id="GO:0043335">
    <property type="term" value="P:protein unfolding"/>
    <property type="evidence" value="ECO:0007669"/>
    <property type="project" value="TreeGrafter"/>
</dbReference>
<dbReference type="FunFam" id="3.10.50.40:FF:000001">
    <property type="entry name" value="Trigger factor"/>
    <property type="match status" value="1"/>
</dbReference>
<dbReference type="FunFam" id="3.30.70.1050:FF:000001">
    <property type="entry name" value="Trigger factor"/>
    <property type="match status" value="1"/>
</dbReference>
<dbReference type="Gene3D" id="3.10.50.40">
    <property type="match status" value="1"/>
</dbReference>
<dbReference type="Gene3D" id="3.30.70.1050">
    <property type="entry name" value="Trigger factor ribosome-binding domain"/>
    <property type="match status" value="1"/>
</dbReference>
<dbReference type="Gene3D" id="1.10.3120.10">
    <property type="entry name" value="Trigger factor, C-terminal domain"/>
    <property type="match status" value="1"/>
</dbReference>
<dbReference type="HAMAP" id="MF_00303">
    <property type="entry name" value="Trigger_factor_Tig"/>
    <property type="match status" value="1"/>
</dbReference>
<dbReference type="InterPro" id="IPR046357">
    <property type="entry name" value="PPIase_dom_sf"/>
</dbReference>
<dbReference type="InterPro" id="IPR001179">
    <property type="entry name" value="PPIase_FKBP_dom"/>
</dbReference>
<dbReference type="InterPro" id="IPR005215">
    <property type="entry name" value="Trig_fac"/>
</dbReference>
<dbReference type="InterPro" id="IPR008880">
    <property type="entry name" value="Trigger_fac_C"/>
</dbReference>
<dbReference type="InterPro" id="IPR037041">
    <property type="entry name" value="Trigger_fac_C_sf"/>
</dbReference>
<dbReference type="InterPro" id="IPR008881">
    <property type="entry name" value="Trigger_fac_ribosome-bd_bac"/>
</dbReference>
<dbReference type="InterPro" id="IPR036611">
    <property type="entry name" value="Trigger_fac_ribosome-bd_sf"/>
</dbReference>
<dbReference type="InterPro" id="IPR027304">
    <property type="entry name" value="Trigger_fact/SurA_dom_sf"/>
</dbReference>
<dbReference type="NCBIfam" id="TIGR00115">
    <property type="entry name" value="tig"/>
    <property type="match status" value="1"/>
</dbReference>
<dbReference type="PANTHER" id="PTHR30560">
    <property type="entry name" value="TRIGGER FACTOR CHAPERONE AND PEPTIDYL-PROLYL CIS/TRANS ISOMERASE"/>
    <property type="match status" value="1"/>
</dbReference>
<dbReference type="PANTHER" id="PTHR30560:SF3">
    <property type="entry name" value="TRIGGER FACTOR-LIKE PROTEIN TIG, CHLOROPLASTIC"/>
    <property type="match status" value="1"/>
</dbReference>
<dbReference type="Pfam" id="PF00254">
    <property type="entry name" value="FKBP_C"/>
    <property type="match status" value="1"/>
</dbReference>
<dbReference type="Pfam" id="PF05698">
    <property type="entry name" value="Trigger_C"/>
    <property type="match status" value="1"/>
</dbReference>
<dbReference type="Pfam" id="PF05697">
    <property type="entry name" value="Trigger_N"/>
    <property type="match status" value="1"/>
</dbReference>
<dbReference type="PIRSF" id="PIRSF003095">
    <property type="entry name" value="Trigger_factor"/>
    <property type="match status" value="1"/>
</dbReference>
<dbReference type="SUPFAM" id="SSF54534">
    <property type="entry name" value="FKBP-like"/>
    <property type="match status" value="1"/>
</dbReference>
<dbReference type="SUPFAM" id="SSF109998">
    <property type="entry name" value="Triger factor/SurA peptide-binding domain-like"/>
    <property type="match status" value="1"/>
</dbReference>
<dbReference type="SUPFAM" id="SSF102735">
    <property type="entry name" value="Trigger factor ribosome-binding domain"/>
    <property type="match status" value="1"/>
</dbReference>
<dbReference type="PROSITE" id="PS50059">
    <property type="entry name" value="FKBP_PPIASE"/>
    <property type="match status" value="1"/>
</dbReference>
<protein>
    <recommendedName>
        <fullName evidence="1">Trigger factor</fullName>
        <shortName evidence="1">TF</shortName>
        <ecNumber evidence="1">5.2.1.8</ecNumber>
    </recommendedName>
    <alternativeName>
        <fullName evidence="1">PPIase</fullName>
    </alternativeName>
</protein>
<proteinExistence type="inferred from homology"/>
<reference key="1">
    <citation type="journal article" date="2003" name="Lancet">
        <title>Genome sequence of Vibrio parahaemolyticus: a pathogenic mechanism distinct from that of V. cholerae.</title>
        <authorList>
            <person name="Makino K."/>
            <person name="Oshima K."/>
            <person name="Kurokawa K."/>
            <person name="Yokoyama K."/>
            <person name="Uda T."/>
            <person name="Tagomori K."/>
            <person name="Iijima Y."/>
            <person name="Najima M."/>
            <person name="Nakano M."/>
            <person name="Yamashita A."/>
            <person name="Kubota Y."/>
            <person name="Kimura S."/>
            <person name="Yasunaga T."/>
            <person name="Honda T."/>
            <person name="Shinagawa H."/>
            <person name="Hattori M."/>
            <person name="Iida T."/>
        </authorList>
    </citation>
    <scope>NUCLEOTIDE SEQUENCE [LARGE SCALE GENOMIC DNA]</scope>
    <source>
        <strain>RIMD 2210633</strain>
    </source>
</reference>